<name>RK22_MEDSA</name>
<feature type="transit peptide" description="Chloroplast">
    <location>
        <begin position="1"/>
        <end status="unknown"/>
    </location>
</feature>
<feature type="chain" id="PRO_0000030485" description="Large ribosomal subunit protein uL22c">
    <location>
        <begin status="unknown"/>
        <end position="200"/>
    </location>
</feature>
<dbReference type="EMBL" id="L00667">
    <property type="protein sequence ID" value="AAB46612.1"/>
    <property type="molecule type" value="mRNA"/>
</dbReference>
<dbReference type="PIR" id="T09389">
    <property type="entry name" value="T09389"/>
</dbReference>
<dbReference type="SMR" id="P49163"/>
<dbReference type="GO" id="GO:0009507">
    <property type="term" value="C:chloroplast"/>
    <property type="evidence" value="ECO:0007669"/>
    <property type="project" value="UniProtKB-SubCell"/>
</dbReference>
<dbReference type="GO" id="GO:0015934">
    <property type="term" value="C:large ribosomal subunit"/>
    <property type="evidence" value="ECO:0007669"/>
    <property type="project" value="InterPro"/>
</dbReference>
<dbReference type="GO" id="GO:0019843">
    <property type="term" value="F:rRNA binding"/>
    <property type="evidence" value="ECO:0007669"/>
    <property type="project" value="UniProtKB-KW"/>
</dbReference>
<dbReference type="GO" id="GO:0003735">
    <property type="term" value="F:structural constituent of ribosome"/>
    <property type="evidence" value="ECO:0007669"/>
    <property type="project" value="InterPro"/>
</dbReference>
<dbReference type="GO" id="GO:0006412">
    <property type="term" value="P:translation"/>
    <property type="evidence" value="ECO:0007669"/>
    <property type="project" value="InterPro"/>
</dbReference>
<dbReference type="CDD" id="cd00336">
    <property type="entry name" value="Ribosomal_L22"/>
    <property type="match status" value="1"/>
</dbReference>
<dbReference type="FunFam" id="3.90.470.10:FF:000004">
    <property type="entry name" value="50S ribosomal protein L22, chloroplastic"/>
    <property type="match status" value="1"/>
</dbReference>
<dbReference type="Gene3D" id="3.90.470.10">
    <property type="entry name" value="Ribosomal protein L22/L17"/>
    <property type="match status" value="1"/>
</dbReference>
<dbReference type="HAMAP" id="MF_01331_B">
    <property type="entry name" value="Ribosomal_uL22_B"/>
    <property type="match status" value="1"/>
</dbReference>
<dbReference type="InterPro" id="IPR001063">
    <property type="entry name" value="Ribosomal_uL22"/>
</dbReference>
<dbReference type="InterPro" id="IPR005727">
    <property type="entry name" value="Ribosomal_uL22_bac/chlpt-type"/>
</dbReference>
<dbReference type="InterPro" id="IPR047867">
    <property type="entry name" value="Ribosomal_uL22_bac/org-type"/>
</dbReference>
<dbReference type="InterPro" id="IPR018260">
    <property type="entry name" value="Ribosomal_uL22_CS"/>
</dbReference>
<dbReference type="InterPro" id="IPR036394">
    <property type="entry name" value="Ribosomal_uL22_sf"/>
</dbReference>
<dbReference type="NCBIfam" id="TIGR01044">
    <property type="entry name" value="rplV_bact"/>
    <property type="match status" value="1"/>
</dbReference>
<dbReference type="PANTHER" id="PTHR13501">
    <property type="entry name" value="CHLOROPLAST 50S RIBOSOMAL PROTEIN L22-RELATED"/>
    <property type="match status" value="1"/>
</dbReference>
<dbReference type="PANTHER" id="PTHR13501:SF10">
    <property type="entry name" value="LARGE RIBOSOMAL SUBUNIT PROTEIN UL22M"/>
    <property type="match status" value="1"/>
</dbReference>
<dbReference type="Pfam" id="PF00237">
    <property type="entry name" value="Ribosomal_L22"/>
    <property type="match status" value="1"/>
</dbReference>
<dbReference type="SUPFAM" id="SSF54843">
    <property type="entry name" value="Ribosomal protein L22"/>
    <property type="match status" value="1"/>
</dbReference>
<dbReference type="PROSITE" id="PS00464">
    <property type="entry name" value="RIBOSOMAL_L22"/>
    <property type="match status" value="1"/>
</dbReference>
<accession>P49163</accession>
<evidence type="ECO:0000250" key="1"/>
<evidence type="ECO:0000305" key="2"/>
<reference key="1">
    <citation type="submission" date="1992-08" db="EMBL/GenBank/DDBJ databases">
        <authorList>
            <person name="Gantt J.S."/>
        </authorList>
    </citation>
    <scope>NUCLEOTIDE SEQUENCE [MRNA]</scope>
    <source>
        <strain>cv. Saranac</strain>
    </source>
</reference>
<keyword id="KW-0150">Chloroplast</keyword>
<keyword id="KW-0934">Plastid</keyword>
<keyword id="KW-0687">Ribonucleoprotein</keyword>
<keyword id="KW-0689">Ribosomal protein</keyword>
<keyword id="KW-0694">RNA-binding</keyword>
<keyword id="KW-0699">rRNA-binding</keyword>
<keyword id="KW-0809">Transit peptide</keyword>
<protein>
    <recommendedName>
        <fullName evidence="2">Large ribosomal subunit protein uL22c</fullName>
    </recommendedName>
    <alternativeName>
        <fullName>50S ribosomal protein L22, chloroplastic</fullName>
    </alternativeName>
    <alternativeName>
        <fullName>CL22</fullName>
    </alternativeName>
</protein>
<sequence length="200" mass="21897">MALSLTAINLPPPPLRDNLLSSQFQFRPNLLKFPKIPSSSSSFNGISLKTVTPNNNNNNPFACHVSTSQFGVQETNKSYAEAVAVGKHIRMSADKARRVIDTIRGRPYEETLMILELMPYRACETILKIVFSAGANASNNLGLSKSSLVISKAEVNEGRTMKRTRPRAQGRANRILKRTCHITITVKGLPAESVVEASSS</sequence>
<gene>
    <name type="primary">rpl22</name>
</gene>
<organism>
    <name type="scientific">Medicago sativa</name>
    <name type="common">Alfalfa</name>
    <dbReference type="NCBI Taxonomy" id="3879"/>
    <lineage>
        <taxon>Eukaryota</taxon>
        <taxon>Viridiplantae</taxon>
        <taxon>Streptophyta</taxon>
        <taxon>Embryophyta</taxon>
        <taxon>Tracheophyta</taxon>
        <taxon>Spermatophyta</taxon>
        <taxon>Magnoliopsida</taxon>
        <taxon>eudicotyledons</taxon>
        <taxon>Gunneridae</taxon>
        <taxon>Pentapetalae</taxon>
        <taxon>rosids</taxon>
        <taxon>fabids</taxon>
        <taxon>Fabales</taxon>
        <taxon>Fabaceae</taxon>
        <taxon>Papilionoideae</taxon>
        <taxon>50 kb inversion clade</taxon>
        <taxon>NPAAA clade</taxon>
        <taxon>Hologalegina</taxon>
        <taxon>IRL clade</taxon>
        <taxon>Trifolieae</taxon>
        <taxon>Medicago</taxon>
    </lineage>
</organism>
<comment type="function">
    <text evidence="1">This protein binds specifically to 23S rRNA.</text>
</comment>
<comment type="function">
    <text evidence="1">The globular domain of the protein is located near the polypeptide exit tunnel on the outside of the subunit, while an extended beta-hairpin is found that lines the wall of the exit tunnel in the center of the 70S ribosome.</text>
</comment>
<comment type="subunit">
    <text>Part of the 50S ribosomal subunit.</text>
</comment>
<comment type="subcellular location">
    <subcellularLocation>
        <location>Plastid</location>
        <location>Chloroplast</location>
    </subcellularLocation>
</comment>
<comment type="miscellaneous">
    <text>In legumes L22 is not encoded in the chloroplast but by a nuclear gene.</text>
</comment>
<comment type="similarity">
    <text evidence="2">Belongs to the universal ribosomal protein uL22 family.</text>
</comment>
<proteinExistence type="evidence at transcript level"/>